<feature type="chain" id="PRO_0000093551" description="Long neurotoxin 5" evidence="3">
    <location>
        <begin position="1"/>
        <end position="71"/>
    </location>
</feature>
<feature type="disulfide bond" evidence="1">
    <location>
        <begin position="3"/>
        <end position="20"/>
    </location>
</feature>
<feature type="disulfide bond" evidence="1">
    <location>
        <begin position="14"/>
        <end position="41"/>
    </location>
</feature>
<feature type="disulfide bond" evidence="1">
    <location>
        <begin position="26"/>
        <end position="30"/>
    </location>
</feature>
<feature type="disulfide bond" evidence="1">
    <location>
        <begin position="45"/>
        <end position="56"/>
    </location>
</feature>
<feature type="disulfide bond" evidence="1">
    <location>
        <begin position="57"/>
        <end position="62"/>
    </location>
</feature>
<accession>P25673</accession>
<protein>
    <recommendedName>
        <fullName>Long neurotoxin 5</fullName>
    </recommendedName>
    <alternativeName>
        <fullName evidence="4">Toxin E</fullName>
    </alternativeName>
</protein>
<reference key="1">
    <citation type="journal article" date="1987" name="Pharmacol. Ther.">
        <title>Current view on the structure-function relationship of postsynaptic neurotoxins from snake venoms.</title>
        <authorList>
            <person name="Endo T."/>
            <person name="Tamiya N."/>
        </authorList>
    </citation>
    <scope>PROTEIN SEQUENCE</scope>
    <scope>SUBCELLULAR LOCATION</scope>
    <source>
        <tissue>Venom</tissue>
    </source>
</reference>
<name>3L25_NAJNA</name>
<proteinExistence type="evidence at protein level"/>
<sequence>IRCFITPDITSKDCPNGHVCYTKTWCDGFCSRRGERVDLGCAATCPTVKTGVDIQCCSTDDCDPFPTRKRP</sequence>
<evidence type="ECO:0000250" key="1">
    <source>
        <dbReference type="UniProtKB" id="P25671"/>
    </source>
</evidence>
<evidence type="ECO:0000250" key="2">
    <source>
        <dbReference type="UniProtKB" id="P60615"/>
    </source>
</evidence>
<evidence type="ECO:0000269" key="3">
    <source>
    </source>
</evidence>
<evidence type="ECO:0000303" key="4">
    <source>
    </source>
</evidence>
<evidence type="ECO:0000305" key="5"/>
<evidence type="ECO:0000305" key="6">
    <source>
    </source>
</evidence>
<keyword id="KW-0008">Acetylcholine receptor inhibiting toxin</keyword>
<keyword id="KW-0903">Direct protein sequencing</keyword>
<keyword id="KW-1015">Disulfide bond</keyword>
<keyword id="KW-0872">Ion channel impairing toxin</keyword>
<keyword id="KW-0528">Neurotoxin</keyword>
<keyword id="KW-0629">Postsynaptic neurotoxin</keyword>
<keyword id="KW-1185">Reference proteome</keyword>
<keyword id="KW-0964">Secreted</keyword>
<keyword id="KW-0800">Toxin</keyword>
<organism>
    <name type="scientific">Naja naja</name>
    <name type="common">Indian cobra</name>
    <dbReference type="NCBI Taxonomy" id="35670"/>
    <lineage>
        <taxon>Eukaryota</taxon>
        <taxon>Metazoa</taxon>
        <taxon>Chordata</taxon>
        <taxon>Craniata</taxon>
        <taxon>Vertebrata</taxon>
        <taxon>Euteleostomi</taxon>
        <taxon>Lepidosauria</taxon>
        <taxon>Squamata</taxon>
        <taxon>Bifurcata</taxon>
        <taxon>Unidentata</taxon>
        <taxon>Episquamata</taxon>
        <taxon>Toxicofera</taxon>
        <taxon>Serpentes</taxon>
        <taxon>Colubroidea</taxon>
        <taxon>Elapidae</taxon>
        <taxon>Elapinae</taxon>
        <taxon>Naja</taxon>
    </lineage>
</organism>
<dbReference type="SMR" id="P25673"/>
<dbReference type="Proteomes" id="UP000694559">
    <property type="component" value="Unplaced"/>
</dbReference>
<dbReference type="GO" id="GO:0005576">
    <property type="term" value="C:extracellular region"/>
    <property type="evidence" value="ECO:0007669"/>
    <property type="project" value="UniProtKB-SubCell"/>
</dbReference>
<dbReference type="GO" id="GO:0030550">
    <property type="term" value="F:acetylcholine receptor inhibitor activity"/>
    <property type="evidence" value="ECO:0007669"/>
    <property type="project" value="UniProtKB-KW"/>
</dbReference>
<dbReference type="GO" id="GO:0099106">
    <property type="term" value="F:ion channel regulator activity"/>
    <property type="evidence" value="ECO:0007669"/>
    <property type="project" value="UniProtKB-KW"/>
</dbReference>
<dbReference type="GO" id="GO:0090729">
    <property type="term" value="F:toxin activity"/>
    <property type="evidence" value="ECO:0007669"/>
    <property type="project" value="UniProtKB-KW"/>
</dbReference>
<dbReference type="CDD" id="cd00206">
    <property type="entry name" value="TFP_snake_toxin"/>
    <property type="match status" value="1"/>
</dbReference>
<dbReference type="Gene3D" id="2.10.60.10">
    <property type="entry name" value="CD59"/>
    <property type="match status" value="1"/>
</dbReference>
<dbReference type="InterPro" id="IPR003571">
    <property type="entry name" value="Snake_3FTx"/>
</dbReference>
<dbReference type="InterPro" id="IPR045860">
    <property type="entry name" value="Snake_toxin-like_sf"/>
</dbReference>
<dbReference type="InterPro" id="IPR018354">
    <property type="entry name" value="Snake_toxin_con_site"/>
</dbReference>
<dbReference type="InterPro" id="IPR054131">
    <property type="entry name" value="Toxin_cobra-type"/>
</dbReference>
<dbReference type="Pfam" id="PF21947">
    <property type="entry name" value="Toxin_cobra-type"/>
    <property type="match status" value="1"/>
</dbReference>
<dbReference type="SUPFAM" id="SSF57302">
    <property type="entry name" value="Snake toxin-like"/>
    <property type="match status" value="1"/>
</dbReference>
<dbReference type="PROSITE" id="PS00272">
    <property type="entry name" value="SNAKE_TOXIN"/>
    <property type="match status" value="1"/>
</dbReference>
<comment type="function">
    <text evidence="2">Binds with high affinity to muscular (alpha-1/CHRNA1) and neuronal (alpha-7/CHRNA7) nicotinic acetylcholine receptor (nAChR) and inhibits acetylcholine from binding to the receptor, thereby impairing neuromuscular and neuronal transmission.</text>
</comment>
<comment type="subcellular location">
    <subcellularLocation>
        <location evidence="3">Secreted</location>
    </subcellularLocation>
</comment>
<comment type="tissue specificity">
    <text evidence="6">Expressed by the venom gland.</text>
</comment>
<comment type="similarity">
    <text evidence="5">Belongs to the three-finger toxin family. Long-chain subfamily. Type II alpha-neurotoxin sub-subfamily.</text>
</comment>